<keyword id="KW-0150">Chloroplast</keyword>
<keyword id="KW-0201">Cytochrome c-type biogenesis</keyword>
<keyword id="KW-0472">Membrane</keyword>
<keyword id="KW-0934">Plastid</keyword>
<keyword id="KW-0793">Thylakoid</keyword>
<keyword id="KW-0812">Transmembrane</keyword>
<keyword id="KW-1133">Transmembrane helix</keyword>
<feature type="chain" id="PRO_0000353726" description="Cytochrome c biogenesis protein CcsA">
    <location>
        <begin position="1"/>
        <end position="321"/>
    </location>
</feature>
<feature type="transmembrane region" description="Helical" evidence="1">
    <location>
        <begin position="9"/>
        <end position="29"/>
    </location>
</feature>
<feature type="transmembrane region" description="Helical" evidence="1">
    <location>
        <begin position="44"/>
        <end position="64"/>
    </location>
</feature>
<feature type="transmembrane region" description="Helical" evidence="1">
    <location>
        <begin position="71"/>
        <end position="91"/>
    </location>
</feature>
<feature type="transmembrane region" description="Helical" evidence="1">
    <location>
        <begin position="98"/>
        <end position="118"/>
    </location>
</feature>
<feature type="transmembrane region" description="Helical" evidence="1">
    <location>
        <begin position="143"/>
        <end position="163"/>
    </location>
</feature>
<feature type="transmembrane region" description="Helical" evidence="1">
    <location>
        <begin position="225"/>
        <end position="245"/>
    </location>
</feature>
<feature type="transmembrane region" description="Helical" evidence="1">
    <location>
        <begin position="252"/>
        <end position="272"/>
    </location>
</feature>
<feature type="transmembrane region" description="Helical" evidence="1">
    <location>
        <begin position="286"/>
        <end position="306"/>
    </location>
</feature>
<protein>
    <recommendedName>
        <fullName evidence="1">Cytochrome c biogenesis protein CcsA</fullName>
    </recommendedName>
</protein>
<sequence>MIFSTLEHILTHISFSIISVVITIQLMNLLVHELVQLGDASEKGMIATFFSITGLLVTRWIYSGHFPLSDLYESLIFLSWSFSIIHMVPYFRNHRNHFSAITAPSAIFTQGFATSGLLTEMHQSIILVPALQSQWLMMHVSMMLLSYAALLCGSLLSVALLVITFRKNSDIFDKRNNFLIRSFFFGEIEYLNEKRSVLQNTSFDSFTNYHKYQLTQRLDFWSYRVISLGFIFLTIGILSGAVWANEAWGSYWNWDPKEIWAFITWAIFAIYLHTRTNHSLQGANSAIVASIGFLIIWICYFGVNLLGIGLHSYGSFTLISN</sequence>
<gene>
    <name evidence="1" type="primary">ccsA</name>
</gene>
<reference key="1">
    <citation type="journal article" date="2005" name="Mol. Biol. Evol.">
        <title>Analysis of Acorus calamus chloroplast genome and its phylogenetic implications.</title>
        <authorList>
            <person name="Goremykin V.V."/>
            <person name="Holland B."/>
            <person name="Hirsch-Ernst K.I."/>
            <person name="Hellwig F.H."/>
        </authorList>
    </citation>
    <scope>NUCLEOTIDE SEQUENCE [LARGE SCALE GENOMIC DNA]</scope>
</reference>
<accession>Q3V4Y5</accession>
<comment type="function">
    <text evidence="1">Required during biogenesis of c-type cytochromes (cytochrome c6 and cytochrome f) at the step of heme attachment.</text>
</comment>
<comment type="subunit">
    <text evidence="1">May interact with Ccs1.</text>
</comment>
<comment type="subcellular location">
    <subcellularLocation>
        <location evidence="1">Plastid</location>
        <location evidence="1">Chloroplast thylakoid membrane</location>
        <topology evidence="1">Multi-pass membrane protein</topology>
    </subcellularLocation>
</comment>
<comment type="similarity">
    <text evidence="1">Belongs to the CcmF/CycK/Ccl1/NrfE/CcsA family.</text>
</comment>
<name>CCSA_ACOCL</name>
<geneLocation type="chloroplast"/>
<proteinExistence type="inferred from homology"/>
<organism>
    <name type="scientific">Acorus calamus</name>
    <name type="common">Sweet flag</name>
    <dbReference type="NCBI Taxonomy" id="4465"/>
    <lineage>
        <taxon>Eukaryota</taxon>
        <taxon>Viridiplantae</taxon>
        <taxon>Streptophyta</taxon>
        <taxon>Embryophyta</taxon>
        <taxon>Tracheophyta</taxon>
        <taxon>Spermatophyta</taxon>
        <taxon>Magnoliopsida</taxon>
        <taxon>Liliopsida</taxon>
        <taxon>Acoraceae</taxon>
        <taxon>Acorus</taxon>
    </lineage>
</organism>
<dbReference type="EMBL" id="AJ879453">
    <property type="protein sequence ID" value="CAI53843.1"/>
    <property type="molecule type" value="Genomic_DNA"/>
</dbReference>
<dbReference type="RefSeq" id="YP_319812.1">
    <property type="nucleotide sequence ID" value="NC_007407.1"/>
</dbReference>
<dbReference type="SMR" id="Q3V4Y5"/>
<dbReference type="GeneID" id="3677510"/>
<dbReference type="GO" id="GO:0009535">
    <property type="term" value="C:chloroplast thylakoid membrane"/>
    <property type="evidence" value="ECO:0007669"/>
    <property type="project" value="UniProtKB-SubCell"/>
</dbReference>
<dbReference type="GO" id="GO:0005886">
    <property type="term" value="C:plasma membrane"/>
    <property type="evidence" value="ECO:0007669"/>
    <property type="project" value="TreeGrafter"/>
</dbReference>
<dbReference type="GO" id="GO:0020037">
    <property type="term" value="F:heme binding"/>
    <property type="evidence" value="ECO:0007669"/>
    <property type="project" value="InterPro"/>
</dbReference>
<dbReference type="GO" id="GO:0017004">
    <property type="term" value="P:cytochrome complex assembly"/>
    <property type="evidence" value="ECO:0007669"/>
    <property type="project" value="UniProtKB-UniRule"/>
</dbReference>
<dbReference type="HAMAP" id="MF_01391">
    <property type="entry name" value="CytC_CcsA"/>
    <property type="match status" value="1"/>
</dbReference>
<dbReference type="InterPro" id="IPR002541">
    <property type="entry name" value="Cyt_c_assembly"/>
</dbReference>
<dbReference type="InterPro" id="IPR017562">
    <property type="entry name" value="Cyt_c_biogenesis_CcsA"/>
</dbReference>
<dbReference type="InterPro" id="IPR045062">
    <property type="entry name" value="Cyt_c_biogenesis_CcsA/CcmC"/>
</dbReference>
<dbReference type="NCBIfam" id="TIGR03144">
    <property type="entry name" value="cytochr_II_ccsB"/>
    <property type="match status" value="1"/>
</dbReference>
<dbReference type="PANTHER" id="PTHR30071:SF1">
    <property type="entry name" value="CYTOCHROME B_B6 PROTEIN-RELATED"/>
    <property type="match status" value="1"/>
</dbReference>
<dbReference type="PANTHER" id="PTHR30071">
    <property type="entry name" value="HEME EXPORTER PROTEIN C"/>
    <property type="match status" value="1"/>
</dbReference>
<dbReference type="Pfam" id="PF01578">
    <property type="entry name" value="Cytochrom_C_asm"/>
    <property type="match status" value="1"/>
</dbReference>
<evidence type="ECO:0000255" key="1">
    <source>
        <dbReference type="HAMAP-Rule" id="MF_01391"/>
    </source>
</evidence>